<dbReference type="EC" id="1.14.14.94" evidence="2 4"/>
<dbReference type="EMBL" id="M94548">
    <property type="protein sequence ID" value="AAA41040.1"/>
    <property type="molecule type" value="mRNA"/>
</dbReference>
<dbReference type="EMBL" id="AF200361">
    <property type="protein sequence ID" value="AAF20822.1"/>
    <property type="molecule type" value="Genomic_DNA"/>
</dbReference>
<dbReference type="PIR" id="S29723">
    <property type="entry name" value="S29723"/>
</dbReference>
<dbReference type="SMR" id="P33274"/>
<dbReference type="FunCoup" id="P33274">
    <property type="interactions" value="95"/>
</dbReference>
<dbReference type="IntAct" id="P33274">
    <property type="interactions" value="1"/>
</dbReference>
<dbReference type="STRING" id="10116.ENSRNOP00000006533"/>
<dbReference type="ChEMBL" id="CHEMBL3509587"/>
<dbReference type="SwissLipids" id="SLP:000001703"/>
<dbReference type="PhosphoSitePlus" id="P33274"/>
<dbReference type="PaxDb" id="10116-ENSRNOP00000006533"/>
<dbReference type="UCSC" id="RGD:70926">
    <property type="organism name" value="rat"/>
</dbReference>
<dbReference type="AGR" id="RGD:70926"/>
<dbReference type="RGD" id="70926">
    <property type="gene designation" value="Cyp4f1"/>
</dbReference>
<dbReference type="eggNOG" id="KOG0157">
    <property type="taxonomic scope" value="Eukaryota"/>
</dbReference>
<dbReference type="InParanoid" id="P33274"/>
<dbReference type="PhylomeDB" id="P33274"/>
<dbReference type="Reactome" id="R-RNO-211935">
    <property type="pathway name" value="Fatty acids"/>
</dbReference>
<dbReference type="Reactome" id="R-RNO-211958">
    <property type="pathway name" value="Miscellaneous substrates"/>
</dbReference>
<dbReference type="Reactome" id="R-RNO-211979">
    <property type="pathway name" value="Eicosanoids"/>
</dbReference>
<dbReference type="Reactome" id="R-RNO-2142691">
    <property type="pathway name" value="Synthesis of Leukotrienes (LT) and Eoxins (EX)"/>
</dbReference>
<dbReference type="PRO" id="PR:P33274"/>
<dbReference type="Proteomes" id="UP000002494">
    <property type="component" value="Unplaced"/>
</dbReference>
<dbReference type="GO" id="GO:0005789">
    <property type="term" value="C:endoplasmic reticulum membrane"/>
    <property type="evidence" value="ECO:0007669"/>
    <property type="project" value="UniProtKB-SubCell"/>
</dbReference>
<dbReference type="GO" id="GO:0050544">
    <property type="term" value="F:arachidonate binding"/>
    <property type="evidence" value="ECO:0000314"/>
    <property type="project" value="RGD"/>
</dbReference>
<dbReference type="GO" id="GO:0008391">
    <property type="term" value="F:arachidonate monooxygenase activity"/>
    <property type="evidence" value="ECO:0000314"/>
    <property type="project" value="UniProtKB"/>
</dbReference>
<dbReference type="GO" id="GO:0052869">
    <property type="term" value="F:arachidonate omega-hydroxylase activity"/>
    <property type="evidence" value="ECO:0007669"/>
    <property type="project" value="RHEA"/>
</dbReference>
<dbReference type="GO" id="GO:0020037">
    <property type="term" value="F:heme binding"/>
    <property type="evidence" value="ECO:0000314"/>
    <property type="project" value="RGD"/>
</dbReference>
<dbReference type="GO" id="GO:0005506">
    <property type="term" value="F:iron ion binding"/>
    <property type="evidence" value="ECO:0007669"/>
    <property type="project" value="InterPro"/>
</dbReference>
<dbReference type="GO" id="GO:0050051">
    <property type="term" value="F:leukotriene-B4 20-monooxygenase activity"/>
    <property type="evidence" value="ECO:0000314"/>
    <property type="project" value="UniProtKB"/>
</dbReference>
<dbReference type="GO" id="GO:0019369">
    <property type="term" value="P:arachidonate metabolic process"/>
    <property type="evidence" value="ECO:0000314"/>
    <property type="project" value="RGD"/>
</dbReference>
<dbReference type="GO" id="GO:0006690">
    <property type="term" value="P:icosanoid metabolic process"/>
    <property type="evidence" value="ECO:0000314"/>
    <property type="project" value="RGD"/>
</dbReference>
<dbReference type="GO" id="GO:0036101">
    <property type="term" value="P:leukotriene B4 catabolic process"/>
    <property type="evidence" value="ECO:0000314"/>
    <property type="project" value="UniProtKB"/>
</dbReference>
<dbReference type="GO" id="GO:0097267">
    <property type="term" value="P:omega-hydroxylase P450 pathway"/>
    <property type="evidence" value="ECO:0000314"/>
    <property type="project" value="UniProtKB"/>
</dbReference>
<dbReference type="GO" id="GO:0009636">
    <property type="term" value="P:response to toxic substance"/>
    <property type="evidence" value="ECO:0000270"/>
    <property type="project" value="RGD"/>
</dbReference>
<dbReference type="CDD" id="cd20679">
    <property type="entry name" value="CYP4F"/>
    <property type="match status" value="1"/>
</dbReference>
<dbReference type="FunFam" id="1.10.630.10:FF:000005">
    <property type="entry name" value="cytochrome P450 4F22 isoform X2"/>
    <property type="match status" value="1"/>
</dbReference>
<dbReference type="Gene3D" id="1.10.630.10">
    <property type="entry name" value="Cytochrome P450"/>
    <property type="match status" value="1"/>
</dbReference>
<dbReference type="InterPro" id="IPR001128">
    <property type="entry name" value="Cyt_P450"/>
</dbReference>
<dbReference type="InterPro" id="IPR017972">
    <property type="entry name" value="Cyt_P450_CS"/>
</dbReference>
<dbReference type="InterPro" id="IPR002401">
    <property type="entry name" value="Cyt_P450_E_grp-I"/>
</dbReference>
<dbReference type="InterPro" id="IPR036396">
    <property type="entry name" value="Cyt_P450_sf"/>
</dbReference>
<dbReference type="InterPro" id="IPR050196">
    <property type="entry name" value="Cytochrome_P450_Monoox"/>
</dbReference>
<dbReference type="PANTHER" id="PTHR24291">
    <property type="entry name" value="CYTOCHROME P450 FAMILY 4"/>
    <property type="match status" value="1"/>
</dbReference>
<dbReference type="PANTHER" id="PTHR24291:SF190">
    <property type="entry name" value="LEUKOTRIENE-B4 OMEGA-HYDROXYLASE 3"/>
    <property type="match status" value="1"/>
</dbReference>
<dbReference type="Pfam" id="PF00067">
    <property type="entry name" value="p450"/>
    <property type="match status" value="1"/>
</dbReference>
<dbReference type="PRINTS" id="PR00463">
    <property type="entry name" value="EP450I"/>
</dbReference>
<dbReference type="PRINTS" id="PR00385">
    <property type="entry name" value="P450"/>
</dbReference>
<dbReference type="SUPFAM" id="SSF48264">
    <property type="entry name" value="Cytochrome P450"/>
    <property type="match status" value="1"/>
</dbReference>
<dbReference type="PROSITE" id="PS00086">
    <property type="entry name" value="CYTOCHROME_P450"/>
    <property type="match status" value="1"/>
</dbReference>
<protein>
    <recommendedName>
        <fullName evidence="6">Cytochrome P450 4F1</fullName>
    </recommendedName>
    <alternativeName>
        <fullName>CYPIVF1</fullName>
    </alternativeName>
    <alternativeName>
        <fullName>Cytochrome P450-A3</fullName>
    </alternativeName>
    <alternativeName>
        <fullName>Leukotriene-B4 20-monooxygenase</fullName>
        <ecNumber evidence="2 4">1.14.14.94</ecNumber>
    </alternativeName>
</protein>
<reference key="1">
    <citation type="journal article" date="1993" name="Arch. Biochem. Biophys.">
        <title>Identification of a new P450 subfamily, CYP4F1, expressed in rat hepatic tumors.</title>
        <authorList>
            <person name="Chen L."/>
            <person name="Hardwick J.P."/>
        </authorList>
    </citation>
    <scope>NUCLEOTIDE SEQUENCE [MRNA]</scope>
    <scope>TISSUE SPECIFICITY</scope>
    <scope>MISCELLANEOUS</scope>
    <source>
        <strain>Sprague-Dawley</strain>
        <tissue>Hepatoma</tissue>
    </source>
</reference>
<reference key="2">
    <citation type="submission" date="1999-10" db="EMBL/GenBank/DDBJ databases">
        <title>Structure and transcriptional activity of the CYP4F1 leukotriene omega hydroxylase gene.</title>
        <authorList>
            <person name="Donelson E.L."/>
            <person name="Wu Y."/>
            <person name="Vernell R."/>
            <person name="Chen L."/>
            <person name="Hardwick J.P."/>
        </authorList>
    </citation>
    <scope>NUCLEOTIDE SEQUENCE [GENOMIC DNA]</scope>
    <source>
        <strain>Sprague-Dawley</strain>
    </source>
</reference>
<reference key="3">
    <citation type="journal article" date="1999" name="Arch. Biochem. Biophys.">
        <title>Purification and characterization of recombinant rat hepatic CYP4F1.</title>
        <authorList>
            <person name="Kikuta Y."/>
            <person name="Kusunose E."/>
            <person name="Ito M."/>
            <person name="Kusunose M."/>
        </authorList>
    </citation>
    <scope>FUNCTION</scope>
    <scope>CATALYTIC ACTIVITY</scope>
    <scope>BIOPHYSICOCHEMICAL PROPERTIES</scope>
</reference>
<reference key="4">
    <citation type="journal article" date="2002" name="Biochemistry">
        <title>Covalent attachment of the heme prosthetic group in the CYP4F cytochrome P450 family.</title>
        <authorList>
            <person name="LeBrun L.A."/>
            <person name="Xu F."/>
            <person name="Kroetz D.L."/>
            <person name="Ortiz de Montellano P.R."/>
        </authorList>
    </citation>
    <scope>COVALENT HEME ATTACHMENT</scope>
</reference>
<reference key="5">
    <citation type="journal article" date="2004" name="J. Pharmacol. Exp. Ther.">
        <title>Catalytic activity and isoform-specific inhibition of rat cytochrome p450 4F enzymes.</title>
        <authorList>
            <person name="Xu F."/>
            <person name="Falck J.R."/>
            <person name="Ortiz de Montellano P.R."/>
            <person name="Kroetz D.L."/>
        </authorList>
    </citation>
    <scope>FUNCTION</scope>
    <scope>CATALYTIC ACTIVITY</scope>
    <scope>BIOPHYSICOCHEMICAL PROPERTIES</scope>
</reference>
<accession>P33274</accession>
<name>CP4F1_RAT</name>
<proteinExistence type="evidence at protein level"/>
<gene>
    <name evidence="6 10" type="primary">Cyp4f1</name>
    <name type="synonym">Cyp4f-1</name>
    <name type="synonym">Cyp4f2</name>
</gene>
<evidence type="ECO:0000255" key="1"/>
<evidence type="ECO:0000269" key="2">
    <source>
    </source>
</evidence>
<evidence type="ECO:0000269" key="3">
    <source>
    </source>
</evidence>
<evidence type="ECO:0000269" key="4">
    <source>
    </source>
</evidence>
<evidence type="ECO:0000269" key="5">
    <source>
    </source>
</evidence>
<evidence type="ECO:0000303" key="6">
    <source>
    </source>
</evidence>
<evidence type="ECO:0000305" key="7"/>
<evidence type="ECO:0000305" key="8">
    <source>
    </source>
</evidence>
<evidence type="ECO:0000305" key="9">
    <source>
    </source>
</evidence>
<evidence type="ECO:0000312" key="10">
    <source>
        <dbReference type="RGD" id="70926"/>
    </source>
</evidence>
<keyword id="KW-0256">Endoplasmic reticulum</keyword>
<keyword id="KW-0349">Heme</keyword>
<keyword id="KW-0408">Iron</keyword>
<keyword id="KW-0472">Membrane</keyword>
<keyword id="KW-0479">Metal-binding</keyword>
<keyword id="KW-0492">Microsome</keyword>
<keyword id="KW-0503">Monooxygenase</keyword>
<keyword id="KW-0560">Oxidoreductase</keyword>
<keyword id="KW-1185">Reference proteome</keyword>
<keyword id="KW-0812">Transmembrane</keyword>
<keyword id="KW-1133">Transmembrane helix</keyword>
<comment type="function">
    <text evidence="2 4">A cytochrome P450 monooxygenase involved in the metabolism of arachidonic acid and its oxygenated derivatives (PubMed:10486137, PubMed:14634044). Mechanistically, uses molecular oxygen inserting one oxygen atom into a substrate, and reducing the second into a water molecule, with two electrons provided by NADPH via cytochrome P450 reductase (CPR; NADPH-ferrihemoprotein reductase). Participates in the conversion of arachidonic acid to omega-hydroxyeicosatetraenoic acid (20-HETE), a signaling molecule acting both as vasoconstrictive and natriuretic with overall effect on arterial blood pressure (PubMed:14634044). May play a role in the oxidative inactivation of eicosanoids, including both pro-inflammatory and anti-inflammatory mediators such as leukotriene B4 (LTB4), lipoxin A4 (LXA4), and several HETEs (PubMed:10486137, PubMed:14634044).</text>
</comment>
<comment type="catalytic activity">
    <reaction evidence="4">
        <text>(5Z,8Z,11Z,14Z)-eicosatetraenoate + reduced [NADPH--hemoprotein reductase] + O2 = 20-hydroxy-(5Z,8Z,11Z,14Z)-eicosatetraenoate + oxidized [NADPH--hemoprotein reductase] + H2O + H(+)</text>
        <dbReference type="Rhea" id="RHEA:39755"/>
        <dbReference type="Rhea" id="RHEA-COMP:11964"/>
        <dbReference type="Rhea" id="RHEA-COMP:11965"/>
        <dbReference type="ChEBI" id="CHEBI:15377"/>
        <dbReference type="ChEBI" id="CHEBI:15378"/>
        <dbReference type="ChEBI" id="CHEBI:15379"/>
        <dbReference type="ChEBI" id="CHEBI:32395"/>
        <dbReference type="ChEBI" id="CHEBI:57618"/>
        <dbReference type="ChEBI" id="CHEBI:58210"/>
        <dbReference type="ChEBI" id="CHEBI:76624"/>
    </reaction>
    <physiologicalReaction direction="left-to-right" evidence="9">
        <dbReference type="Rhea" id="RHEA:39756"/>
    </physiologicalReaction>
</comment>
<comment type="catalytic activity">
    <reaction evidence="2">
        <text>5-hydroxy-(6E,8Z,11Z,14Z)-eicosatetraenoate + reduced [NADPH--hemoprotein reductase] + O2 = 5,20-dihydroxy-(6E,8Z,11Z,14Z)-eicosatetraenoate + oxidized [NADPH--hemoprotein reductase] + H2O + H(+)</text>
        <dbReference type="Rhea" id="RHEA:48656"/>
        <dbReference type="Rhea" id="RHEA-COMP:11964"/>
        <dbReference type="Rhea" id="RHEA-COMP:11965"/>
        <dbReference type="ChEBI" id="CHEBI:15377"/>
        <dbReference type="ChEBI" id="CHEBI:15378"/>
        <dbReference type="ChEBI" id="CHEBI:15379"/>
        <dbReference type="ChEBI" id="CHEBI:57618"/>
        <dbReference type="ChEBI" id="CHEBI:58210"/>
        <dbReference type="ChEBI" id="CHEBI:65341"/>
        <dbReference type="ChEBI" id="CHEBI:90715"/>
    </reaction>
    <physiologicalReaction direction="left-to-right" evidence="8">
        <dbReference type="Rhea" id="RHEA:48657"/>
    </physiologicalReaction>
</comment>
<comment type="catalytic activity">
    <reaction evidence="2">
        <text>8-hydroxy-(5Z,9E,11Z,14Z)-eicosatetraenoate + reduced [NADPH--hemoprotein reductase] + O2 = 8,20-dihydroxy-(5Z,9E,11Z,14Z)-eicosatetraenoate + oxidized [NADPH--hemoprotein reductase] + H2O + H(+)</text>
        <dbReference type="Rhea" id="RHEA:48660"/>
        <dbReference type="Rhea" id="RHEA-COMP:11964"/>
        <dbReference type="Rhea" id="RHEA-COMP:11965"/>
        <dbReference type="ChEBI" id="CHEBI:15377"/>
        <dbReference type="ChEBI" id="CHEBI:15378"/>
        <dbReference type="ChEBI" id="CHEBI:15379"/>
        <dbReference type="ChEBI" id="CHEBI:57618"/>
        <dbReference type="ChEBI" id="CHEBI:58210"/>
        <dbReference type="ChEBI" id="CHEBI:90716"/>
        <dbReference type="ChEBI" id="CHEBI:90717"/>
    </reaction>
    <physiologicalReaction direction="left-to-right" evidence="8">
        <dbReference type="Rhea" id="RHEA:48661"/>
    </physiologicalReaction>
</comment>
<comment type="catalytic activity">
    <reaction evidence="2 4">
        <text>leukotriene B4 + reduced [NADPH--hemoprotein reductase] + O2 = 20-hydroxy-leukotriene B4 + oxidized [NADPH--hemoprotein reductase] + H2O + H(+)</text>
        <dbReference type="Rhea" id="RHEA:22176"/>
        <dbReference type="Rhea" id="RHEA-COMP:11964"/>
        <dbReference type="Rhea" id="RHEA-COMP:11965"/>
        <dbReference type="ChEBI" id="CHEBI:15377"/>
        <dbReference type="ChEBI" id="CHEBI:15378"/>
        <dbReference type="ChEBI" id="CHEBI:15379"/>
        <dbReference type="ChEBI" id="CHEBI:57460"/>
        <dbReference type="ChEBI" id="CHEBI:57461"/>
        <dbReference type="ChEBI" id="CHEBI:57618"/>
        <dbReference type="ChEBI" id="CHEBI:58210"/>
        <dbReference type="EC" id="1.14.14.94"/>
    </reaction>
    <physiologicalReaction direction="left-to-right" evidence="8 9">
        <dbReference type="Rhea" id="RHEA:22177"/>
    </physiologicalReaction>
</comment>
<comment type="catalytic activity">
    <reaction evidence="2">
        <text>6-trans-leukotriene B4 + reduced [NADPH--hemoprotein reductase] + O2 = 20-hydroxy-6-trans-leukotriene B4 + oxidized [NADPH--hemoprotein reductase] + H2O + H(+)</text>
        <dbReference type="Rhea" id="RHEA:48676"/>
        <dbReference type="Rhea" id="RHEA-COMP:11964"/>
        <dbReference type="Rhea" id="RHEA-COMP:11965"/>
        <dbReference type="ChEBI" id="CHEBI:15377"/>
        <dbReference type="ChEBI" id="CHEBI:15378"/>
        <dbReference type="ChEBI" id="CHEBI:15379"/>
        <dbReference type="ChEBI" id="CHEBI:57618"/>
        <dbReference type="ChEBI" id="CHEBI:58210"/>
        <dbReference type="ChEBI" id="CHEBI:90723"/>
        <dbReference type="ChEBI" id="CHEBI:90732"/>
    </reaction>
    <physiologicalReaction direction="left-to-right" evidence="8">
        <dbReference type="Rhea" id="RHEA:48677"/>
    </physiologicalReaction>
</comment>
<comment type="catalytic activity">
    <reaction evidence="2">
        <text>lipoxin A4 + reduced [NADPH--hemoprotein reductase] + O2 = 20-hydroxy-lipoxin A4 + oxidized [NADPH--hemoprotein reductase] + H2O + H(+)</text>
        <dbReference type="Rhea" id="RHEA:48648"/>
        <dbReference type="Rhea" id="RHEA-COMP:11964"/>
        <dbReference type="Rhea" id="RHEA-COMP:11965"/>
        <dbReference type="ChEBI" id="CHEBI:15377"/>
        <dbReference type="ChEBI" id="CHEBI:15378"/>
        <dbReference type="ChEBI" id="CHEBI:15379"/>
        <dbReference type="ChEBI" id="CHEBI:57618"/>
        <dbReference type="ChEBI" id="CHEBI:58210"/>
        <dbReference type="ChEBI" id="CHEBI:67026"/>
        <dbReference type="ChEBI" id="CHEBI:90707"/>
    </reaction>
    <physiologicalReaction direction="left-to-right" evidence="8">
        <dbReference type="Rhea" id="RHEA:48649"/>
    </physiologicalReaction>
</comment>
<comment type="cofactor">
    <cofactor evidence="3">
        <name>heme</name>
        <dbReference type="ChEBI" id="CHEBI:30413"/>
    </cofactor>
</comment>
<comment type="biophysicochemical properties">
    <kinetics>
        <KM evidence="2">18 uM for 8-hydroxy-(5Z,9E,11Z,14Z)-eicosatetraenoate</KM>
        <KM evidence="4">24 uM for leukotriene B4</KM>
        <KM evidence="2">81 uM for lipoxin A4</KM>
        <Vmax evidence="2">15.0 nmol/min/nmol enzyme toward 8-hydroxy-(5Z,9E,11Z,14Z)-eicosatetraenoate</Vmax>
        <Vmax evidence="4">10.0 nmol/min/nmol enzyme toward leukotriene B4</Vmax>
        <Vmax evidence="2">9.74 nmol/min/nmol enzyme toward lipoxin A4</Vmax>
    </kinetics>
    <phDependence>
        <text evidence="2">Optimum pH is 7.5.</text>
    </phDependence>
</comment>
<comment type="subcellular location">
    <subcellularLocation>
        <location>Endoplasmic reticulum membrane</location>
        <topology evidence="1">Single-pass membrane protein</topology>
    </subcellularLocation>
    <subcellularLocation>
        <location>Microsome membrane</location>
        <topology evidence="1">Peripheral membrane protein</topology>
    </subcellularLocation>
</comment>
<comment type="tissue specificity">
    <text evidence="5">Expressed in liver.</text>
</comment>
<comment type="miscellaneous">
    <text evidence="5">Highly expressed in aflatoxin B1-induced hepatic tumors.</text>
</comment>
<comment type="similarity">
    <text evidence="7">Belongs to the cytochrome P450 family.</text>
</comment>
<organism>
    <name type="scientific">Rattus norvegicus</name>
    <name type="common">Rat</name>
    <dbReference type="NCBI Taxonomy" id="10116"/>
    <lineage>
        <taxon>Eukaryota</taxon>
        <taxon>Metazoa</taxon>
        <taxon>Chordata</taxon>
        <taxon>Craniata</taxon>
        <taxon>Vertebrata</taxon>
        <taxon>Euteleostomi</taxon>
        <taxon>Mammalia</taxon>
        <taxon>Eutheria</taxon>
        <taxon>Euarchontoglires</taxon>
        <taxon>Glires</taxon>
        <taxon>Rodentia</taxon>
        <taxon>Myomorpha</taxon>
        <taxon>Muroidea</taxon>
        <taxon>Muridae</taxon>
        <taxon>Murinae</taxon>
        <taxon>Rattus</taxon>
    </lineage>
</organism>
<sequence>MSQLSLSWLGLGPEVAFPWQTLLLFGASWILAQILTQIYAAYRNFRRLRGFPQPPKRNWLMGHVGMVTPTEQGLKELTRLVGTYPQGFLMWIGPMVPVITLCHSDIVRSILNASAAVALKDVIFYTILKPWLGDGLLVSAGDKWSRHRRMLTPAFHFNILKPYVKIFNDSTNIMHAKWKRLISEGSSRLDMFEHVSLMTLDSLQKCVFSFDSNCQEKSSEYIAAILELSALVAKRHQQPLLFMDLLYNLTPDGMRFHKACNLVHEFTDAVIRERRRTLPDQGLDEFLKSKAKSKTLDFIDVLLLTKDEDGKELSDEDIRAEADTFMFEGHDTTASGLSWILYNLANDPEYQERCRQEVQELLRDRDPEEIEWDDLAQLPFLTMCIKESLRLHPPVTVISRCCTQDILLPDGRTIPKGIICLISIFGIHHNPSVWPDPEVYNPFRFDPENIKDSSPLAFIPFSAGPRNCIGQTFAMSEMKVALALTLLRFRLLPDDKEPRRQPELILRAEGGLWLRVEPLTAGAQ</sequence>
<feature type="chain" id="PRO_0000051849" description="Cytochrome P450 4F1">
    <location>
        <begin position="1"/>
        <end position="524"/>
    </location>
</feature>
<feature type="transmembrane region" description="Helical" evidence="1">
    <location>
        <begin position="15"/>
        <end position="35"/>
    </location>
</feature>
<feature type="binding site" description="covalent" evidence="3">
    <location>
        <position position="328"/>
    </location>
    <ligand>
        <name>heme</name>
        <dbReference type="ChEBI" id="CHEBI:30413"/>
    </ligand>
</feature>
<feature type="binding site" description="axial binding residue" evidence="3">
    <location>
        <position position="468"/>
    </location>
    <ligand>
        <name>heme</name>
        <dbReference type="ChEBI" id="CHEBI:30413"/>
    </ligand>
    <ligandPart>
        <name>Fe</name>
        <dbReference type="ChEBI" id="CHEBI:18248"/>
    </ligandPart>
</feature>